<name>RS12_DICNV</name>
<comment type="function">
    <text evidence="2">With S4 and S5 plays an important role in translational accuracy.</text>
</comment>
<comment type="function">
    <text evidence="2">Interacts with and stabilizes bases of the 16S rRNA that are involved in tRNA selection in the A site and with the mRNA backbone. Located at the interface of the 30S and 50S subunits, it traverses the body of the 30S subunit contacting proteins on the other side and probably holding the rRNA structure together. The combined cluster of proteins S8, S12 and S17 appears to hold together the shoulder and platform of the 30S subunit.</text>
</comment>
<comment type="subunit">
    <text evidence="2">Part of the 30S ribosomal subunit. Contacts proteins S8 and S17. May interact with IF1 in the 30S initiation complex.</text>
</comment>
<comment type="similarity">
    <text evidence="2">Belongs to the universal ribosomal protein uS12 family.</text>
</comment>
<sequence>MATINQLVRKPRVKLVDKNNVPALQECPQKRGVCTRVYTTTPKKPNSAMRKVARTRLTNKYEVTAYIGGEGHNLQEHSLVLIRGGRVKDLPGVRYHIVRGALDTAGVKDRKKGRSKYGAKRPKA</sequence>
<dbReference type="EMBL" id="CP000513">
    <property type="protein sequence ID" value="ABQ13338.1"/>
    <property type="molecule type" value="Genomic_DNA"/>
</dbReference>
<dbReference type="RefSeq" id="WP_012031575.1">
    <property type="nucleotide sequence ID" value="NC_009446.1"/>
</dbReference>
<dbReference type="SMR" id="A5EX68"/>
<dbReference type="STRING" id="246195.DNO_1280"/>
<dbReference type="KEGG" id="dno:DNO_1280"/>
<dbReference type="eggNOG" id="COG0048">
    <property type="taxonomic scope" value="Bacteria"/>
</dbReference>
<dbReference type="HOGENOM" id="CLU_104295_1_2_6"/>
<dbReference type="OrthoDB" id="9802366at2"/>
<dbReference type="Proteomes" id="UP000000248">
    <property type="component" value="Chromosome"/>
</dbReference>
<dbReference type="GO" id="GO:0015935">
    <property type="term" value="C:small ribosomal subunit"/>
    <property type="evidence" value="ECO:0007669"/>
    <property type="project" value="InterPro"/>
</dbReference>
<dbReference type="GO" id="GO:0019843">
    <property type="term" value="F:rRNA binding"/>
    <property type="evidence" value="ECO:0007669"/>
    <property type="project" value="UniProtKB-UniRule"/>
</dbReference>
<dbReference type="GO" id="GO:0003735">
    <property type="term" value="F:structural constituent of ribosome"/>
    <property type="evidence" value="ECO:0007669"/>
    <property type="project" value="InterPro"/>
</dbReference>
<dbReference type="GO" id="GO:0000049">
    <property type="term" value="F:tRNA binding"/>
    <property type="evidence" value="ECO:0007669"/>
    <property type="project" value="UniProtKB-UniRule"/>
</dbReference>
<dbReference type="GO" id="GO:0006412">
    <property type="term" value="P:translation"/>
    <property type="evidence" value="ECO:0007669"/>
    <property type="project" value="UniProtKB-UniRule"/>
</dbReference>
<dbReference type="CDD" id="cd03368">
    <property type="entry name" value="Ribosomal_S12"/>
    <property type="match status" value="1"/>
</dbReference>
<dbReference type="FunFam" id="2.40.50.140:FF:000001">
    <property type="entry name" value="30S ribosomal protein S12"/>
    <property type="match status" value="1"/>
</dbReference>
<dbReference type="Gene3D" id="2.40.50.140">
    <property type="entry name" value="Nucleic acid-binding proteins"/>
    <property type="match status" value="1"/>
</dbReference>
<dbReference type="HAMAP" id="MF_00403_B">
    <property type="entry name" value="Ribosomal_uS12_B"/>
    <property type="match status" value="1"/>
</dbReference>
<dbReference type="InterPro" id="IPR012340">
    <property type="entry name" value="NA-bd_OB-fold"/>
</dbReference>
<dbReference type="InterPro" id="IPR006032">
    <property type="entry name" value="Ribosomal_uS12"/>
</dbReference>
<dbReference type="InterPro" id="IPR005679">
    <property type="entry name" value="Ribosomal_uS12_bac"/>
</dbReference>
<dbReference type="NCBIfam" id="TIGR00981">
    <property type="entry name" value="rpsL_bact"/>
    <property type="match status" value="1"/>
</dbReference>
<dbReference type="PANTHER" id="PTHR11652">
    <property type="entry name" value="30S RIBOSOMAL PROTEIN S12 FAMILY MEMBER"/>
    <property type="match status" value="1"/>
</dbReference>
<dbReference type="Pfam" id="PF00164">
    <property type="entry name" value="Ribosom_S12_S23"/>
    <property type="match status" value="1"/>
</dbReference>
<dbReference type="PIRSF" id="PIRSF002133">
    <property type="entry name" value="Ribosomal_S12/S23"/>
    <property type="match status" value="1"/>
</dbReference>
<dbReference type="PRINTS" id="PR01034">
    <property type="entry name" value="RIBOSOMALS12"/>
</dbReference>
<dbReference type="SUPFAM" id="SSF50249">
    <property type="entry name" value="Nucleic acid-binding proteins"/>
    <property type="match status" value="1"/>
</dbReference>
<dbReference type="PROSITE" id="PS00055">
    <property type="entry name" value="RIBOSOMAL_S12"/>
    <property type="match status" value="1"/>
</dbReference>
<gene>
    <name evidence="2" type="primary">rpsL</name>
    <name type="ordered locus">DNO_1280</name>
</gene>
<keyword id="KW-0488">Methylation</keyword>
<keyword id="KW-1185">Reference proteome</keyword>
<keyword id="KW-0687">Ribonucleoprotein</keyword>
<keyword id="KW-0689">Ribosomal protein</keyword>
<keyword id="KW-0694">RNA-binding</keyword>
<keyword id="KW-0699">rRNA-binding</keyword>
<keyword id="KW-0820">tRNA-binding</keyword>
<evidence type="ECO:0000250" key="1"/>
<evidence type="ECO:0000255" key="2">
    <source>
        <dbReference type="HAMAP-Rule" id="MF_00403"/>
    </source>
</evidence>
<evidence type="ECO:0000256" key="3">
    <source>
        <dbReference type="SAM" id="MobiDB-lite"/>
    </source>
</evidence>
<evidence type="ECO:0000305" key="4"/>
<organism>
    <name type="scientific">Dichelobacter nodosus (strain VCS1703A)</name>
    <dbReference type="NCBI Taxonomy" id="246195"/>
    <lineage>
        <taxon>Bacteria</taxon>
        <taxon>Pseudomonadati</taxon>
        <taxon>Pseudomonadota</taxon>
        <taxon>Gammaproteobacteria</taxon>
        <taxon>Cardiobacteriales</taxon>
        <taxon>Cardiobacteriaceae</taxon>
        <taxon>Dichelobacter</taxon>
    </lineage>
</organism>
<feature type="chain" id="PRO_0000295971" description="Small ribosomal subunit protein uS12">
    <location>
        <begin position="1"/>
        <end position="124"/>
    </location>
</feature>
<feature type="region of interest" description="Disordered" evidence="3">
    <location>
        <begin position="105"/>
        <end position="124"/>
    </location>
</feature>
<feature type="compositionally biased region" description="Basic residues" evidence="3">
    <location>
        <begin position="109"/>
        <end position="124"/>
    </location>
</feature>
<feature type="modified residue" description="3-methylthioaspartic acid" evidence="1">
    <location>
        <position position="89"/>
    </location>
</feature>
<proteinExistence type="inferred from homology"/>
<reference key="1">
    <citation type="journal article" date="2007" name="Nat. Biotechnol.">
        <title>Genome sequence and identification of candidate vaccine antigens from the animal pathogen Dichelobacter nodosus.</title>
        <authorList>
            <person name="Myers G.S.A."/>
            <person name="Parker D."/>
            <person name="Al-Hasani K."/>
            <person name="Kennan R.M."/>
            <person name="Seemann T."/>
            <person name="Ren Q."/>
            <person name="Badger J.H."/>
            <person name="Selengut J.D."/>
            <person name="Deboy R.T."/>
            <person name="Tettelin H."/>
            <person name="Boyce J.D."/>
            <person name="McCarl V.P."/>
            <person name="Han X."/>
            <person name="Nelson W.C."/>
            <person name="Madupu R."/>
            <person name="Mohamoud Y."/>
            <person name="Holley T."/>
            <person name="Fedorova N."/>
            <person name="Khouri H."/>
            <person name="Bottomley S.P."/>
            <person name="Whittington R.J."/>
            <person name="Adler B."/>
            <person name="Songer J.G."/>
            <person name="Rood J.I."/>
            <person name="Paulsen I.T."/>
        </authorList>
    </citation>
    <scope>NUCLEOTIDE SEQUENCE [LARGE SCALE GENOMIC DNA]</scope>
    <source>
        <strain>VCS1703A</strain>
    </source>
</reference>
<protein>
    <recommendedName>
        <fullName evidence="2">Small ribosomal subunit protein uS12</fullName>
    </recommendedName>
    <alternativeName>
        <fullName evidence="4">30S ribosomal protein S12</fullName>
    </alternativeName>
</protein>
<accession>A5EX68</accession>